<protein>
    <recommendedName>
        <fullName evidence="1">NAD(P)H-quinone oxidoreductase subunit 2 A, chloroplastic</fullName>
        <ecNumber evidence="1">7.1.1.-</ecNumber>
    </recommendedName>
    <alternativeName>
        <fullName evidence="1">NAD(P)H dehydrogenase, subunit 2 A</fullName>
    </alternativeName>
    <alternativeName>
        <fullName evidence="1">NADH-plastoquinone oxidoreductase subunit 2 A</fullName>
    </alternativeName>
</protein>
<keyword id="KW-0150">Chloroplast</keyword>
<keyword id="KW-0472">Membrane</keyword>
<keyword id="KW-0520">NAD</keyword>
<keyword id="KW-0521">NADP</keyword>
<keyword id="KW-0934">Plastid</keyword>
<keyword id="KW-0618">Plastoquinone</keyword>
<keyword id="KW-0874">Quinone</keyword>
<keyword id="KW-0793">Thylakoid</keyword>
<keyword id="KW-1278">Translocase</keyword>
<keyword id="KW-0812">Transmembrane</keyword>
<keyword id="KW-1133">Transmembrane helix</keyword>
<keyword id="KW-0813">Transport</keyword>
<reference key="1">
    <citation type="journal article" date="2008" name="Nucleic Acids Res.">
        <title>The complete nucleotide sequences of the five genetically distinct plastid genomes of Oenothera, subsection Oenothera: I. Sequence evaluation and plastome evolution.</title>
        <authorList>
            <person name="Greiner S."/>
            <person name="Wang X."/>
            <person name="Rauwolf U."/>
            <person name="Silber M.V."/>
            <person name="Mayer K."/>
            <person name="Meurer J."/>
            <person name="Haberer G."/>
            <person name="Herrmann R.G."/>
        </authorList>
    </citation>
    <scope>NUCLEOTIDE SEQUENCE [LARGE SCALE GENOMIC DNA]</scope>
    <source>
        <strain>cv. Suaveolens Grado</strain>
    </source>
</reference>
<accession>P0CD08</accession>
<accession>B0Z504</accession>
<geneLocation type="chloroplast"/>
<gene>
    <name evidence="1" type="primary">ndhB1</name>
</gene>
<dbReference type="EC" id="7.1.1.-" evidence="1"/>
<dbReference type="EMBL" id="EU262889">
    <property type="protein sequence ID" value="ABW98916.1"/>
    <property type="molecule type" value="Genomic_DNA"/>
</dbReference>
<dbReference type="SMR" id="P0CD08"/>
<dbReference type="GO" id="GO:0009535">
    <property type="term" value="C:chloroplast thylakoid membrane"/>
    <property type="evidence" value="ECO:0007669"/>
    <property type="project" value="UniProtKB-SubCell"/>
</dbReference>
<dbReference type="GO" id="GO:0008137">
    <property type="term" value="F:NADH dehydrogenase (ubiquinone) activity"/>
    <property type="evidence" value="ECO:0007669"/>
    <property type="project" value="InterPro"/>
</dbReference>
<dbReference type="GO" id="GO:0048038">
    <property type="term" value="F:quinone binding"/>
    <property type="evidence" value="ECO:0007669"/>
    <property type="project" value="UniProtKB-KW"/>
</dbReference>
<dbReference type="GO" id="GO:0042773">
    <property type="term" value="P:ATP synthesis coupled electron transport"/>
    <property type="evidence" value="ECO:0007669"/>
    <property type="project" value="InterPro"/>
</dbReference>
<dbReference type="GO" id="GO:0019684">
    <property type="term" value="P:photosynthesis, light reaction"/>
    <property type="evidence" value="ECO:0007669"/>
    <property type="project" value="UniProtKB-UniRule"/>
</dbReference>
<dbReference type="HAMAP" id="MF_00445">
    <property type="entry name" value="NDH1_NuoN_1"/>
    <property type="match status" value="1"/>
</dbReference>
<dbReference type="InterPro" id="IPR010096">
    <property type="entry name" value="NADH-Q_OxRdtase_suN/2"/>
</dbReference>
<dbReference type="InterPro" id="IPR001750">
    <property type="entry name" value="ND/Mrp_TM"/>
</dbReference>
<dbReference type="InterPro" id="IPR045693">
    <property type="entry name" value="Ndh2_N"/>
</dbReference>
<dbReference type="NCBIfam" id="TIGR01770">
    <property type="entry name" value="NDH_I_N"/>
    <property type="match status" value="1"/>
</dbReference>
<dbReference type="NCBIfam" id="NF002701">
    <property type="entry name" value="PRK02504.1"/>
    <property type="match status" value="1"/>
</dbReference>
<dbReference type="PANTHER" id="PTHR22773">
    <property type="entry name" value="NADH DEHYDROGENASE"/>
    <property type="match status" value="1"/>
</dbReference>
<dbReference type="Pfam" id="PF19530">
    <property type="entry name" value="Ndh2_N"/>
    <property type="match status" value="1"/>
</dbReference>
<dbReference type="Pfam" id="PF00361">
    <property type="entry name" value="Proton_antipo_M"/>
    <property type="match status" value="1"/>
</dbReference>
<proteinExistence type="inferred from homology"/>
<evidence type="ECO:0000255" key="1">
    <source>
        <dbReference type="HAMAP-Rule" id="MF_00445"/>
    </source>
</evidence>
<organism>
    <name type="scientific">Oenothera biennis</name>
    <name type="common">German evening primrose</name>
    <name type="synonym">Onagra biennis</name>
    <dbReference type="NCBI Taxonomy" id="3942"/>
    <lineage>
        <taxon>Eukaryota</taxon>
        <taxon>Viridiplantae</taxon>
        <taxon>Streptophyta</taxon>
        <taxon>Embryophyta</taxon>
        <taxon>Tracheophyta</taxon>
        <taxon>Spermatophyta</taxon>
        <taxon>Magnoliopsida</taxon>
        <taxon>eudicotyledons</taxon>
        <taxon>Gunneridae</taxon>
        <taxon>Pentapetalae</taxon>
        <taxon>rosids</taxon>
        <taxon>malvids</taxon>
        <taxon>Myrtales</taxon>
        <taxon>Onagraceae</taxon>
        <taxon>Onagroideae</taxon>
        <taxon>Onagreae</taxon>
        <taxon>Oenothera</taxon>
    </lineage>
</organism>
<comment type="function">
    <text evidence="1">NDH shuttles electrons from NAD(P)H:plastoquinone, via FMN and iron-sulfur (Fe-S) centers, to quinones in the photosynthetic chain and possibly in a chloroplast respiratory chain. The immediate electron acceptor for the enzyme in this species is believed to be plastoquinone. Couples the redox reaction to proton translocation, and thus conserves the redox energy in a proton gradient.</text>
</comment>
<comment type="catalytic activity">
    <reaction evidence="1">
        <text>a plastoquinone + NADH + (n+1) H(+)(in) = a plastoquinol + NAD(+) + n H(+)(out)</text>
        <dbReference type="Rhea" id="RHEA:42608"/>
        <dbReference type="Rhea" id="RHEA-COMP:9561"/>
        <dbReference type="Rhea" id="RHEA-COMP:9562"/>
        <dbReference type="ChEBI" id="CHEBI:15378"/>
        <dbReference type="ChEBI" id="CHEBI:17757"/>
        <dbReference type="ChEBI" id="CHEBI:57540"/>
        <dbReference type="ChEBI" id="CHEBI:57945"/>
        <dbReference type="ChEBI" id="CHEBI:62192"/>
    </reaction>
</comment>
<comment type="catalytic activity">
    <reaction evidence="1">
        <text>a plastoquinone + NADPH + (n+1) H(+)(in) = a plastoquinol + NADP(+) + n H(+)(out)</text>
        <dbReference type="Rhea" id="RHEA:42612"/>
        <dbReference type="Rhea" id="RHEA-COMP:9561"/>
        <dbReference type="Rhea" id="RHEA-COMP:9562"/>
        <dbReference type="ChEBI" id="CHEBI:15378"/>
        <dbReference type="ChEBI" id="CHEBI:17757"/>
        <dbReference type="ChEBI" id="CHEBI:57783"/>
        <dbReference type="ChEBI" id="CHEBI:58349"/>
        <dbReference type="ChEBI" id="CHEBI:62192"/>
    </reaction>
</comment>
<comment type="subunit">
    <text evidence="1">NDH is composed of at least 16 different subunits, 5 of which are encoded in the nucleus.</text>
</comment>
<comment type="subcellular location">
    <subcellularLocation>
        <location evidence="1">Plastid</location>
        <location evidence="1">Chloroplast thylakoid membrane</location>
        <topology evidence="1">Multi-pass membrane protein</topology>
    </subcellularLocation>
</comment>
<comment type="similarity">
    <text evidence="1">Belongs to the complex I subunit 2 family.</text>
</comment>
<sequence>MIWHVQNENLILDSTRIFMKAFHLPLFDGSFIFPEGILIFGLILLLMIDSTSDQTDIPWFYFISSISLVMSITALLFRWREEPRILFSGNFQTNNFNEIFQFLILLCSTLCIPLSVEYIECTEMAITEFLLFVLTATLGGMFLCGANDLITIFVAPECFSLCSYLLSGYTKKDVRSNEATMKYLLMGGASSSILVHGFSWLYGSSGGEIELQEIVNGLINTQMYNSPGISIALIFITVGIGFKLSPAPSHQWTPDVYEGSPTPVVAFLSVTSKVAASASATRIFDIPFYFSSNEWHPLLEILAILSMILGNLIAITQTSMKRMLAYSSIGQIGYVIIGIIVGDANGGYASMITYMLFYISMNLGTFACIVLFGLRTGTDNIRDYAGLYTKDPFLALSLALCLLSLGGLPPLAGFFGKLHLFWCGWQAGLYFLVSIGLFTSVVSIYYYLKIIKLLMTGRKQEITPHVRNYRRSPLRSNNSIELSMIVCVIASTIPGISMNPIIAIAQDTLF</sequence>
<feature type="chain" id="PRO_0000344276" description="NAD(P)H-quinone oxidoreductase subunit 2 A, chloroplastic">
    <location>
        <begin position="1"/>
        <end position="510"/>
    </location>
</feature>
<feature type="transmembrane region" description="Helical" evidence="1">
    <location>
        <begin position="26"/>
        <end position="46"/>
    </location>
</feature>
<feature type="transmembrane region" description="Helical" evidence="1">
    <location>
        <begin position="57"/>
        <end position="77"/>
    </location>
</feature>
<feature type="transmembrane region" description="Helical" evidence="1">
    <location>
        <begin position="99"/>
        <end position="119"/>
    </location>
</feature>
<feature type="transmembrane region" description="Helical" evidence="1">
    <location>
        <begin position="124"/>
        <end position="144"/>
    </location>
</feature>
<feature type="transmembrane region" description="Helical" evidence="1">
    <location>
        <begin position="149"/>
        <end position="169"/>
    </location>
</feature>
<feature type="transmembrane region" description="Helical" evidence="1">
    <location>
        <begin position="183"/>
        <end position="203"/>
    </location>
</feature>
<feature type="transmembrane region" description="Helical" evidence="1">
    <location>
        <begin position="227"/>
        <end position="247"/>
    </location>
</feature>
<feature type="transmembrane region" description="Helical" evidence="1">
    <location>
        <begin position="295"/>
        <end position="315"/>
    </location>
</feature>
<feature type="transmembrane region" description="Helical" evidence="1">
    <location>
        <begin position="323"/>
        <end position="342"/>
    </location>
</feature>
<feature type="transmembrane region" description="Helical" evidence="1">
    <location>
        <begin position="354"/>
        <end position="374"/>
    </location>
</feature>
<feature type="transmembrane region" description="Helical" evidence="1">
    <location>
        <begin position="395"/>
        <end position="415"/>
    </location>
</feature>
<feature type="transmembrane region" description="Helical" evidence="1">
    <location>
        <begin position="418"/>
        <end position="438"/>
    </location>
</feature>
<feature type="transmembrane region" description="Helical" evidence="1">
    <location>
        <begin position="484"/>
        <end position="504"/>
    </location>
</feature>
<name>NU2C1_OENBI</name>